<feature type="chain" id="PRO_0000048390" description="Tubulin beta chain">
    <location>
        <begin position="1"/>
        <end position="444"/>
    </location>
</feature>
<feature type="region of interest" description="Disordered" evidence="3">
    <location>
        <begin position="424"/>
        <end position="444"/>
    </location>
</feature>
<feature type="compositionally biased region" description="Acidic residues" evidence="3">
    <location>
        <begin position="427"/>
        <end position="444"/>
    </location>
</feature>
<feature type="binding site" evidence="2">
    <location>
        <position position="11"/>
    </location>
    <ligand>
        <name>GTP</name>
        <dbReference type="ChEBI" id="CHEBI:37565"/>
    </ligand>
</feature>
<feature type="binding site" evidence="1">
    <location>
        <position position="68"/>
    </location>
    <ligand>
        <name>GTP</name>
        <dbReference type="ChEBI" id="CHEBI:37565"/>
    </ligand>
</feature>
<feature type="binding site" evidence="1">
    <location>
        <position position="68"/>
    </location>
    <ligand>
        <name>Mg(2+)</name>
        <dbReference type="ChEBI" id="CHEBI:18420"/>
    </ligand>
</feature>
<feature type="binding site" evidence="2">
    <location>
        <position position="137"/>
    </location>
    <ligand>
        <name>GTP</name>
        <dbReference type="ChEBI" id="CHEBI:37565"/>
    </ligand>
</feature>
<feature type="binding site" evidence="2">
    <location>
        <position position="141"/>
    </location>
    <ligand>
        <name>GTP</name>
        <dbReference type="ChEBI" id="CHEBI:37565"/>
    </ligand>
</feature>
<feature type="binding site" evidence="2">
    <location>
        <position position="142"/>
    </location>
    <ligand>
        <name>GTP</name>
        <dbReference type="ChEBI" id="CHEBI:37565"/>
    </ligand>
</feature>
<feature type="binding site" evidence="2">
    <location>
        <position position="143"/>
    </location>
    <ligand>
        <name>GTP</name>
        <dbReference type="ChEBI" id="CHEBI:37565"/>
    </ligand>
</feature>
<feature type="binding site" evidence="2">
    <location>
        <position position="203"/>
    </location>
    <ligand>
        <name>GTP</name>
        <dbReference type="ChEBI" id="CHEBI:37565"/>
    </ligand>
</feature>
<feature type="binding site" evidence="2">
    <location>
        <position position="225"/>
    </location>
    <ligand>
        <name>GTP</name>
        <dbReference type="ChEBI" id="CHEBI:37565"/>
    </ligand>
</feature>
<organism>
    <name type="scientific">Achlya klebsiana</name>
    <dbReference type="NCBI Taxonomy" id="4767"/>
    <lineage>
        <taxon>Eukaryota</taxon>
        <taxon>Sar</taxon>
        <taxon>Stramenopiles</taxon>
        <taxon>Oomycota</taxon>
        <taxon>Saprolegniales</taxon>
        <taxon>Saprolegniaceae</taxon>
        <taxon>Achlya</taxon>
    </lineage>
</organism>
<sequence length="444" mass="49851">MRELVHIQGGQCGNQIGAKFWEVISDEHGVDPTGSYHGDSDLQLERINVYYNEATGTYVPRAILMDLEPGTMDSVRAGPYGQLFRPDNFVFGQTGAGNNWAKGHYTEGAELIDSVLDVVRKEAESCDCLQGFQITHSLGGGTGSGMGTLLISKIREEYPDRIMCTYSVCPSPKVSDTVVEPYNATLSVHQLVENADEVMCLDNEALYDICFRTLKLTNPTYGDLNHLVCAAMSGITTLLRFPGQLNSVLKLAVNLIPFPRLHFFMIGFAPLTSRGSQQYRALTVPELTQQQFDAKNMMCAADPRHGRYLTAACMFRGRMSTKEVDEQMLNVQNKNSSYFVEWIPNNIKASVCDIPPKGLKMSTTFIGNSTAIQEMFKRVSEQFTAMFRRKAFLHWYTGEGMDEMEFTEAESNMNDLVSEYQQYQDATAEEEGEFDEDEEMDEMM</sequence>
<protein>
    <recommendedName>
        <fullName>Tubulin beta chain</fullName>
    </recommendedName>
    <alternativeName>
        <fullName>Beta-tubulin</fullName>
    </alternativeName>
</protein>
<accession>P20802</accession>
<evidence type="ECO:0000250" key="1">
    <source>
        <dbReference type="UniProtKB" id="P68363"/>
    </source>
</evidence>
<evidence type="ECO:0000250" key="2">
    <source>
        <dbReference type="UniProtKB" id="Q13509"/>
    </source>
</evidence>
<evidence type="ECO:0000256" key="3">
    <source>
        <dbReference type="SAM" id="MobiDB-lite"/>
    </source>
</evidence>
<evidence type="ECO:0000305" key="4"/>
<reference key="1">
    <citation type="journal article" date="1990" name="J. Biol. Chem.">
        <title>Cloning and analysis of beta-tubulin gene from a protoctist.</title>
        <authorList>
            <person name="Cameron L.E."/>
            <person name="Hutsul J.-A."/>
            <person name="Thorlacius L."/>
            <person name="Lejohn H.B."/>
        </authorList>
    </citation>
    <scope>NUCLEOTIDE SEQUENCE [GENOMIC DNA]</scope>
</reference>
<dbReference type="EMBL" id="J05597">
    <property type="protein sequence ID" value="AAA63161.1"/>
    <property type="molecule type" value="Genomic_DNA"/>
</dbReference>
<dbReference type="PIR" id="A35885">
    <property type="entry name" value="A35885"/>
</dbReference>
<dbReference type="SMR" id="P20802"/>
<dbReference type="GO" id="GO:0005737">
    <property type="term" value="C:cytoplasm"/>
    <property type="evidence" value="ECO:0007669"/>
    <property type="project" value="UniProtKB-KW"/>
</dbReference>
<dbReference type="GO" id="GO:0005874">
    <property type="term" value="C:microtubule"/>
    <property type="evidence" value="ECO:0007669"/>
    <property type="project" value="UniProtKB-KW"/>
</dbReference>
<dbReference type="GO" id="GO:0005525">
    <property type="term" value="F:GTP binding"/>
    <property type="evidence" value="ECO:0007669"/>
    <property type="project" value="UniProtKB-KW"/>
</dbReference>
<dbReference type="GO" id="GO:0003924">
    <property type="term" value="F:GTPase activity"/>
    <property type="evidence" value="ECO:0007669"/>
    <property type="project" value="InterPro"/>
</dbReference>
<dbReference type="GO" id="GO:0046872">
    <property type="term" value="F:metal ion binding"/>
    <property type="evidence" value="ECO:0007669"/>
    <property type="project" value="UniProtKB-KW"/>
</dbReference>
<dbReference type="GO" id="GO:0005200">
    <property type="term" value="F:structural constituent of cytoskeleton"/>
    <property type="evidence" value="ECO:0007669"/>
    <property type="project" value="InterPro"/>
</dbReference>
<dbReference type="GO" id="GO:0007017">
    <property type="term" value="P:microtubule-based process"/>
    <property type="evidence" value="ECO:0007669"/>
    <property type="project" value="InterPro"/>
</dbReference>
<dbReference type="CDD" id="cd02187">
    <property type="entry name" value="beta_tubulin"/>
    <property type="match status" value="1"/>
</dbReference>
<dbReference type="FunFam" id="1.10.287.600:FF:000002">
    <property type="entry name" value="Tubulin beta chain"/>
    <property type="match status" value="1"/>
</dbReference>
<dbReference type="FunFam" id="3.30.1330.20:FF:000002">
    <property type="entry name" value="Tubulin beta chain"/>
    <property type="match status" value="1"/>
</dbReference>
<dbReference type="FunFam" id="3.40.50.1440:FF:000003">
    <property type="entry name" value="Tubulin beta chain"/>
    <property type="match status" value="1"/>
</dbReference>
<dbReference type="Gene3D" id="1.10.287.600">
    <property type="entry name" value="Helix hairpin bin"/>
    <property type="match status" value="1"/>
</dbReference>
<dbReference type="Gene3D" id="3.30.1330.20">
    <property type="entry name" value="Tubulin/FtsZ, C-terminal domain"/>
    <property type="match status" value="1"/>
</dbReference>
<dbReference type="Gene3D" id="3.40.50.1440">
    <property type="entry name" value="Tubulin/FtsZ, GTPase domain"/>
    <property type="match status" value="1"/>
</dbReference>
<dbReference type="InterPro" id="IPR013838">
    <property type="entry name" value="Beta-tubulin_BS"/>
</dbReference>
<dbReference type="InterPro" id="IPR002453">
    <property type="entry name" value="Beta_tubulin"/>
</dbReference>
<dbReference type="InterPro" id="IPR008280">
    <property type="entry name" value="Tub_FtsZ_C"/>
</dbReference>
<dbReference type="InterPro" id="IPR000217">
    <property type="entry name" value="Tubulin"/>
</dbReference>
<dbReference type="InterPro" id="IPR037103">
    <property type="entry name" value="Tubulin/FtsZ-like_C"/>
</dbReference>
<dbReference type="InterPro" id="IPR018316">
    <property type="entry name" value="Tubulin/FtsZ_2-layer-sand-dom"/>
</dbReference>
<dbReference type="InterPro" id="IPR036525">
    <property type="entry name" value="Tubulin/FtsZ_GTPase_sf"/>
</dbReference>
<dbReference type="InterPro" id="IPR023123">
    <property type="entry name" value="Tubulin_C"/>
</dbReference>
<dbReference type="InterPro" id="IPR017975">
    <property type="entry name" value="Tubulin_CS"/>
</dbReference>
<dbReference type="InterPro" id="IPR003008">
    <property type="entry name" value="Tubulin_FtsZ_GTPase"/>
</dbReference>
<dbReference type="PANTHER" id="PTHR11588">
    <property type="entry name" value="TUBULIN"/>
    <property type="match status" value="1"/>
</dbReference>
<dbReference type="Pfam" id="PF00091">
    <property type="entry name" value="Tubulin"/>
    <property type="match status" value="1"/>
</dbReference>
<dbReference type="Pfam" id="PF03953">
    <property type="entry name" value="Tubulin_C"/>
    <property type="match status" value="1"/>
</dbReference>
<dbReference type="PRINTS" id="PR01163">
    <property type="entry name" value="BETATUBULIN"/>
</dbReference>
<dbReference type="PRINTS" id="PR01161">
    <property type="entry name" value="TUBULIN"/>
</dbReference>
<dbReference type="SMART" id="SM00864">
    <property type="entry name" value="Tubulin"/>
    <property type="match status" value="1"/>
</dbReference>
<dbReference type="SMART" id="SM00865">
    <property type="entry name" value="Tubulin_C"/>
    <property type="match status" value="1"/>
</dbReference>
<dbReference type="SUPFAM" id="SSF55307">
    <property type="entry name" value="Tubulin C-terminal domain-like"/>
    <property type="match status" value="1"/>
</dbReference>
<dbReference type="SUPFAM" id="SSF52490">
    <property type="entry name" value="Tubulin nucleotide-binding domain-like"/>
    <property type="match status" value="1"/>
</dbReference>
<dbReference type="PROSITE" id="PS00227">
    <property type="entry name" value="TUBULIN"/>
    <property type="match status" value="1"/>
</dbReference>
<dbReference type="PROSITE" id="PS00228">
    <property type="entry name" value="TUBULIN_B_AUTOREG"/>
    <property type="match status" value="1"/>
</dbReference>
<name>TBB_ACHKL</name>
<proteinExistence type="evidence at transcript level"/>
<comment type="function">
    <text>Tubulin is the major constituent of microtubules, a cylinder consisting of laterally associated linear protofilaments composed of alpha- and beta-tubulin heterodimers. Microtubules grow by the addition of GTP-tubulin dimers to the microtubule end, where a stabilizing cap forms. Below the cap, tubulin dimers are in GDP-bound state, owing to GTPase activity of alpha-tubulin.</text>
</comment>
<comment type="cofactor">
    <cofactor evidence="1">
        <name>Mg(2+)</name>
        <dbReference type="ChEBI" id="CHEBI:18420"/>
    </cofactor>
</comment>
<comment type="subunit">
    <text>Dimer of alpha and beta chains. A typical microtubule is a hollow water-filled tube with an outer diameter of 25 nm and an inner diameter of 15 nM. Alpha-beta heterodimers associate head-to-tail to form protofilaments running lengthwise along the microtubule wall with the beta-tubulin subunit facing the microtubule plus end conferring a structural polarity. Microtubules usually have 13 protofilaments but different protofilament numbers can be found in some organisms and specialized cells.</text>
</comment>
<comment type="subcellular location">
    <subcellularLocation>
        <location>Cytoplasm</location>
        <location>Cytoskeleton</location>
    </subcellularLocation>
</comment>
<comment type="developmental stage">
    <text>Sporangium formation.</text>
</comment>
<comment type="similarity">
    <text evidence="4">Belongs to the tubulin family.</text>
</comment>
<keyword id="KW-0963">Cytoplasm</keyword>
<keyword id="KW-0206">Cytoskeleton</keyword>
<keyword id="KW-0342">GTP-binding</keyword>
<keyword id="KW-0460">Magnesium</keyword>
<keyword id="KW-0479">Metal-binding</keyword>
<keyword id="KW-0493">Microtubule</keyword>
<keyword id="KW-0547">Nucleotide-binding</keyword>